<evidence type="ECO:0000250" key="1"/>
<evidence type="ECO:0000256" key="2">
    <source>
        <dbReference type="SAM" id="MobiDB-lite"/>
    </source>
</evidence>
<evidence type="ECO:0000269" key="3">
    <source>
    </source>
</evidence>
<evidence type="ECO:0000305" key="4"/>
<sequence>MAKSQRSQIKNEDISFVSQEDDSSKKFVKDDSENSEEELEDLNSEDEFYQSNSSEDEIEEEVQESTIADDIADILNQQVTQTDEQDTPVLSLSKKSKKALRKSNAEKKDSKLRTSRRRERLRKEMVGRVTSVVAVNAETAKALFTHERELRRIARRGVVQLFNAVRTAQLQSSLNRENISGGRTAREQKVKELSKASFLDLIKSQ</sequence>
<name>RRP15_SCHPO</name>
<protein>
    <recommendedName>
        <fullName>Ribosomal RNA-processing protein 15</fullName>
    </recommendedName>
</protein>
<dbReference type="EMBL" id="CU329670">
    <property type="protein sequence ID" value="CAB61451.1"/>
    <property type="molecule type" value="Genomic_DNA"/>
</dbReference>
<dbReference type="PIR" id="T50158">
    <property type="entry name" value="T50158"/>
</dbReference>
<dbReference type="RefSeq" id="NP_592956.1">
    <property type="nucleotide sequence ID" value="NM_001018356.2"/>
</dbReference>
<dbReference type="SMR" id="Q9UTD7"/>
<dbReference type="BioGRID" id="278409">
    <property type="interactions" value="4"/>
</dbReference>
<dbReference type="FunCoup" id="Q9UTD7">
    <property type="interactions" value="25"/>
</dbReference>
<dbReference type="STRING" id="284812.Q9UTD7"/>
<dbReference type="iPTMnet" id="Q9UTD7"/>
<dbReference type="PaxDb" id="4896-SPAC227.02c.1"/>
<dbReference type="EnsemblFungi" id="SPAC227.02c.1">
    <property type="protein sequence ID" value="SPAC227.02c.1:pep"/>
    <property type="gene ID" value="SPAC227.02c"/>
</dbReference>
<dbReference type="GeneID" id="2541919"/>
<dbReference type="KEGG" id="spo:2541919"/>
<dbReference type="PomBase" id="SPAC227.02c">
    <property type="gene designation" value="rrp15"/>
</dbReference>
<dbReference type="VEuPathDB" id="FungiDB:SPAC227.02c"/>
<dbReference type="eggNOG" id="KOG2974">
    <property type="taxonomic scope" value="Eukaryota"/>
</dbReference>
<dbReference type="HOGENOM" id="CLU_1278289_0_0_1"/>
<dbReference type="InParanoid" id="Q9UTD7"/>
<dbReference type="OMA" id="FVKQRFY"/>
<dbReference type="PRO" id="PR:Q9UTD7"/>
<dbReference type="Proteomes" id="UP000002485">
    <property type="component" value="Chromosome I"/>
</dbReference>
<dbReference type="GO" id="GO:0005730">
    <property type="term" value="C:nucleolus"/>
    <property type="evidence" value="ECO:0007005"/>
    <property type="project" value="PomBase"/>
</dbReference>
<dbReference type="GO" id="GO:0030687">
    <property type="term" value="C:preribosome, large subunit precursor"/>
    <property type="evidence" value="ECO:0000318"/>
    <property type="project" value="GO_Central"/>
</dbReference>
<dbReference type="GO" id="GO:0000460">
    <property type="term" value="P:maturation of 5.8S rRNA"/>
    <property type="evidence" value="ECO:0000318"/>
    <property type="project" value="GO_Central"/>
</dbReference>
<dbReference type="GO" id="GO:0000470">
    <property type="term" value="P:maturation of LSU-rRNA"/>
    <property type="evidence" value="ECO:0000318"/>
    <property type="project" value="GO_Central"/>
</dbReference>
<dbReference type="InterPro" id="IPR012459">
    <property type="entry name" value="Rrp15"/>
</dbReference>
<dbReference type="PANTHER" id="PTHR13245">
    <property type="entry name" value="RRP15-LIKE PROTEIN"/>
    <property type="match status" value="1"/>
</dbReference>
<dbReference type="PANTHER" id="PTHR13245:SF14">
    <property type="entry name" value="RRP15-LIKE PROTEIN"/>
    <property type="match status" value="1"/>
</dbReference>
<dbReference type="Pfam" id="PF07890">
    <property type="entry name" value="Rrp15p"/>
    <property type="match status" value="1"/>
</dbReference>
<organism>
    <name type="scientific">Schizosaccharomyces pombe (strain 972 / ATCC 24843)</name>
    <name type="common">Fission yeast</name>
    <dbReference type="NCBI Taxonomy" id="284812"/>
    <lineage>
        <taxon>Eukaryota</taxon>
        <taxon>Fungi</taxon>
        <taxon>Dikarya</taxon>
        <taxon>Ascomycota</taxon>
        <taxon>Taphrinomycotina</taxon>
        <taxon>Schizosaccharomycetes</taxon>
        <taxon>Schizosaccharomycetales</taxon>
        <taxon>Schizosaccharomycetaceae</taxon>
        <taxon>Schizosaccharomyces</taxon>
    </lineage>
</organism>
<proteinExistence type="inferred from homology"/>
<keyword id="KW-0539">Nucleus</keyword>
<keyword id="KW-1185">Reference proteome</keyword>
<keyword id="KW-0690">Ribosome biogenesis</keyword>
<keyword id="KW-0698">rRNA processing</keyword>
<feature type="chain" id="PRO_0000363395" description="Ribosomal RNA-processing protein 15">
    <location>
        <begin position="1"/>
        <end position="205"/>
    </location>
</feature>
<feature type="region of interest" description="Disordered" evidence="2">
    <location>
        <begin position="1"/>
        <end position="63"/>
    </location>
</feature>
<feature type="region of interest" description="Disordered" evidence="2">
    <location>
        <begin position="79"/>
        <end position="118"/>
    </location>
</feature>
<feature type="compositionally biased region" description="Basic and acidic residues" evidence="2">
    <location>
        <begin position="22"/>
        <end position="32"/>
    </location>
</feature>
<feature type="compositionally biased region" description="Acidic residues" evidence="2">
    <location>
        <begin position="33"/>
        <end position="63"/>
    </location>
</feature>
<feature type="compositionally biased region" description="Basic and acidic residues" evidence="2">
    <location>
        <begin position="103"/>
        <end position="112"/>
    </location>
</feature>
<gene>
    <name type="primary">rrp15</name>
    <name type="ORF">SPAC227.02c</name>
</gene>
<accession>Q9UTD7</accession>
<reference key="1">
    <citation type="journal article" date="2002" name="Nature">
        <title>The genome sequence of Schizosaccharomyces pombe.</title>
        <authorList>
            <person name="Wood V."/>
            <person name="Gwilliam R."/>
            <person name="Rajandream M.A."/>
            <person name="Lyne M.H."/>
            <person name="Lyne R."/>
            <person name="Stewart A."/>
            <person name="Sgouros J.G."/>
            <person name="Peat N."/>
            <person name="Hayles J."/>
            <person name="Baker S.G."/>
            <person name="Basham D."/>
            <person name="Bowman S."/>
            <person name="Brooks K."/>
            <person name="Brown D."/>
            <person name="Brown S."/>
            <person name="Chillingworth T."/>
            <person name="Churcher C.M."/>
            <person name="Collins M."/>
            <person name="Connor R."/>
            <person name="Cronin A."/>
            <person name="Davis P."/>
            <person name="Feltwell T."/>
            <person name="Fraser A."/>
            <person name="Gentles S."/>
            <person name="Goble A."/>
            <person name="Hamlin N."/>
            <person name="Harris D.E."/>
            <person name="Hidalgo J."/>
            <person name="Hodgson G."/>
            <person name="Holroyd S."/>
            <person name="Hornsby T."/>
            <person name="Howarth S."/>
            <person name="Huckle E.J."/>
            <person name="Hunt S."/>
            <person name="Jagels K."/>
            <person name="James K.D."/>
            <person name="Jones L."/>
            <person name="Jones M."/>
            <person name="Leather S."/>
            <person name="McDonald S."/>
            <person name="McLean J."/>
            <person name="Mooney P."/>
            <person name="Moule S."/>
            <person name="Mungall K.L."/>
            <person name="Murphy L.D."/>
            <person name="Niblett D."/>
            <person name="Odell C."/>
            <person name="Oliver K."/>
            <person name="O'Neil S."/>
            <person name="Pearson D."/>
            <person name="Quail M.A."/>
            <person name="Rabbinowitsch E."/>
            <person name="Rutherford K.M."/>
            <person name="Rutter S."/>
            <person name="Saunders D."/>
            <person name="Seeger K."/>
            <person name="Sharp S."/>
            <person name="Skelton J."/>
            <person name="Simmonds M.N."/>
            <person name="Squares R."/>
            <person name="Squares S."/>
            <person name="Stevens K."/>
            <person name="Taylor K."/>
            <person name="Taylor R.G."/>
            <person name="Tivey A."/>
            <person name="Walsh S.V."/>
            <person name="Warren T."/>
            <person name="Whitehead S."/>
            <person name="Woodward J.R."/>
            <person name="Volckaert G."/>
            <person name="Aert R."/>
            <person name="Robben J."/>
            <person name="Grymonprez B."/>
            <person name="Weltjens I."/>
            <person name="Vanstreels E."/>
            <person name="Rieger M."/>
            <person name="Schaefer M."/>
            <person name="Mueller-Auer S."/>
            <person name="Gabel C."/>
            <person name="Fuchs M."/>
            <person name="Duesterhoeft A."/>
            <person name="Fritzc C."/>
            <person name="Holzer E."/>
            <person name="Moestl D."/>
            <person name="Hilbert H."/>
            <person name="Borzym K."/>
            <person name="Langer I."/>
            <person name="Beck A."/>
            <person name="Lehrach H."/>
            <person name="Reinhardt R."/>
            <person name="Pohl T.M."/>
            <person name="Eger P."/>
            <person name="Zimmermann W."/>
            <person name="Wedler H."/>
            <person name="Wambutt R."/>
            <person name="Purnelle B."/>
            <person name="Goffeau A."/>
            <person name="Cadieu E."/>
            <person name="Dreano S."/>
            <person name="Gloux S."/>
            <person name="Lelaure V."/>
            <person name="Mottier S."/>
            <person name="Galibert F."/>
            <person name="Aves S.J."/>
            <person name="Xiang Z."/>
            <person name="Hunt C."/>
            <person name="Moore K."/>
            <person name="Hurst S.M."/>
            <person name="Lucas M."/>
            <person name="Rochet M."/>
            <person name="Gaillardin C."/>
            <person name="Tallada V.A."/>
            <person name="Garzon A."/>
            <person name="Thode G."/>
            <person name="Daga R.R."/>
            <person name="Cruzado L."/>
            <person name="Jimenez J."/>
            <person name="Sanchez M."/>
            <person name="del Rey F."/>
            <person name="Benito J."/>
            <person name="Dominguez A."/>
            <person name="Revuelta J.L."/>
            <person name="Moreno S."/>
            <person name="Armstrong J."/>
            <person name="Forsburg S.L."/>
            <person name="Cerutti L."/>
            <person name="Lowe T."/>
            <person name="McCombie W.R."/>
            <person name="Paulsen I."/>
            <person name="Potashkin J."/>
            <person name="Shpakovski G.V."/>
            <person name="Ussery D."/>
            <person name="Barrell B.G."/>
            <person name="Nurse P."/>
        </authorList>
    </citation>
    <scope>NUCLEOTIDE SEQUENCE [LARGE SCALE GENOMIC DNA]</scope>
    <source>
        <strain>972 / ATCC 24843</strain>
    </source>
</reference>
<reference key="2">
    <citation type="journal article" date="2006" name="Nat. Biotechnol.">
        <title>ORFeome cloning and global analysis of protein localization in the fission yeast Schizosaccharomyces pombe.</title>
        <authorList>
            <person name="Matsuyama A."/>
            <person name="Arai R."/>
            <person name="Yashiroda Y."/>
            <person name="Shirai A."/>
            <person name="Kamata A."/>
            <person name="Sekido S."/>
            <person name="Kobayashi Y."/>
            <person name="Hashimoto A."/>
            <person name="Hamamoto M."/>
            <person name="Hiraoka Y."/>
            <person name="Horinouchi S."/>
            <person name="Yoshida M."/>
        </authorList>
    </citation>
    <scope>SUBCELLULAR LOCATION [LARGE SCALE ANALYSIS]</scope>
</reference>
<comment type="function">
    <text evidence="1">Constituent of pre-60S ribosomal particles. Required for large subunit rRNA maturation (By similarity).</text>
</comment>
<comment type="subcellular location">
    <subcellularLocation>
        <location evidence="3">Nucleus</location>
        <location evidence="3">Nucleolus</location>
    </subcellularLocation>
</comment>
<comment type="similarity">
    <text evidence="4">Belongs to the RRP15 family.</text>
</comment>